<gene>
    <name evidence="1" type="primary">der</name>
    <name type="synonym">engA</name>
    <name type="ordered locus">Cj0386</name>
</gene>
<comment type="function">
    <text evidence="1">GTPase that plays an essential role in the late steps of ribosome biogenesis.</text>
</comment>
<comment type="subunit">
    <text evidence="1">Associates with the 50S ribosomal subunit.</text>
</comment>
<comment type="similarity">
    <text evidence="1">Belongs to the TRAFAC class TrmE-Era-EngA-EngB-Septin-like GTPase superfamily. EngA (Der) GTPase family.</text>
</comment>
<name>DER_CAMJE</name>
<keyword id="KW-0342">GTP-binding</keyword>
<keyword id="KW-0547">Nucleotide-binding</keyword>
<keyword id="KW-1185">Reference proteome</keyword>
<keyword id="KW-0677">Repeat</keyword>
<keyword id="KW-0690">Ribosome biogenesis</keyword>
<proteinExistence type="inferred from homology"/>
<evidence type="ECO:0000255" key="1">
    <source>
        <dbReference type="HAMAP-Rule" id="MF_00195"/>
    </source>
</evidence>
<organism>
    <name type="scientific">Campylobacter jejuni subsp. jejuni serotype O:2 (strain ATCC 700819 / NCTC 11168)</name>
    <dbReference type="NCBI Taxonomy" id="192222"/>
    <lineage>
        <taxon>Bacteria</taxon>
        <taxon>Pseudomonadati</taxon>
        <taxon>Campylobacterota</taxon>
        <taxon>Epsilonproteobacteria</taxon>
        <taxon>Campylobacterales</taxon>
        <taxon>Campylobacteraceae</taxon>
        <taxon>Campylobacter</taxon>
    </lineage>
</organism>
<accession>Q9PIB6</accession>
<accession>Q0PBC4</accession>
<protein>
    <recommendedName>
        <fullName evidence="1">GTPase Der</fullName>
    </recommendedName>
    <alternativeName>
        <fullName evidence="1">GTP-binding protein EngA</fullName>
    </alternativeName>
</protein>
<sequence length="460" mass="52641">MQSIILIGKPNVGKSSLFNRMARQRIAITSDISGTTRDTNKTQIHIHSKKAMLIDSGGLDESDELFKNVKKNTLKVAKESDIILYLVDGKLAPDDEDRQFFYSLKKLGKPIALVINKVDNKKDEERAWEFANFGVKEIFNLSVTHNVGLDELYEWLEKFLHEEFLIPDEEENLEDFLEYYEEGKEFQFKEVDQNHIRVGIVGRVNVGKSSLLNALVKQERSVVSSIAGTTIDPVNESVVHKDKVIEFVDTAGIRKRGKIQGLERFALNRTEKILSHSQIALLVLDAHEGFNELDERIAGLVAKHYLGVIIVLNKWDKSEMDFDKTVKELRLDRFKFLAYAPVISVSALSGKRVHVLLDKILQIFENFTQKIQTSKLNTLIENATRAHPLPHDYGKLVKIYYAVQYDLAPPKIALIMNRPKALHFSYKRYLQNQIRKEFNFEGVPLVIASRKKGSKENDES</sequence>
<reference key="1">
    <citation type="journal article" date="2000" name="Nature">
        <title>The genome sequence of the food-borne pathogen Campylobacter jejuni reveals hypervariable sequences.</title>
        <authorList>
            <person name="Parkhill J."/>
            <person name="Wren B.W."/>
            <person name="Mungall K.L."/>
            <person name="Ketley J.M."/>
            <person name="Churcher C.M."/>
            <person name="Basham D."/>
            <person name="Chillingworth T."/>
            <person name="Davies R.M."/>
            <person name="Feltwell T."/>
            <person name="Holroyd S."/>
            <person name="Jagels K."/>
            <person name="Karlyshev A.V."/>
            <person name="Moule S."/>
            <person name="Pallen M.J."/>
            <person name="Penn C.W."/>
            <person name="Quail M.A."/>
            <person name="Rajandream M.A."/>
            <person name="Rutherford K.M."/>
            <person name="van Vliet A.H.M."/>
            <person name="Whitehead S."/>
            <person name="Barrell B.G."/>
        </authorList>
    </citation>
    <scope>NUCLEOTIDE SEQUENCE [LARGE SCALE GENOMIC DNA]</scope>
    <source>
        <strain>ATCC 700819 / NCTC 11168</strain>
    </source>
</reference>
<feature type="chain" id="PRO_0000178977" description="GTPase Der">
    <location>
        <begin position="1"/>
        <end position="460"/>
    </location>
</feature>
<feature type="domain" description="EngA-type G 1">
    <location>
        <begin position="2"/>
        <end position="164"/>
    </location>
</feature>
<feature type="domain" description="EngA-type G 2">
    <location>
        <begin position="196"/>
        <end position="368"/>
    </location>
</feature>
<feature type="domain" description="KH-like" evidence="1">
    <location>
        <begin position="369"/>
        <end position="453"/>
    </location>
</feature>
<feature type="binding site" evidence="1">
    <location>
        <begin position="8"/>
        <end position="15"/>
    </location>
    <ligand>
        <name>GTP</name>
        <dbReference type="ChEBI" id="CHEBI:37565"/>
        <label>1</label>
    </ligand>
</feature>
<feature type="binding site" evidence="1">
    <location>
        <begin position="55"/>
        <end position="59"/>
    </location>
    <ligand>
        <name>GTP</name>
        <dbReference type="ChEBI" id="CHEBI:37565"/>
        <label>1</label>
    </ligand>
</feature>
<feature type="binding site" evidence="1">
    <location>
        <begin position="116"/>
        <end position="119"/>
    </location>
    <ligand>
        <name>GTP</name>
        <dbReference type="ChEBI" id="CHEBI:37565"/>
        <label>1</label>
    </ligand>
</feature>
<feature type="binding site" evidence="1">
    <location>
        <begin position="202"/>
        <end position="209"/>
    </location>
    <ligand>
        <name>GTP</name>
        <dbReference type="ChEBI" id="CHEBI:37565"/>
        <label>2</label>
    </ligand>
</feature>
<feature type="binding site" evidence="1">
    <location>
        <begin position="249"/>
        <end position="253"/>
    </location>
    <ligand>
        <name>GTP</name>
        <dbReference type="ChEBI" id="CHEBI:37565"/>
        <label>2</label>
    </ligand>
</feature>
<feature type="binding site" evidence="1">
    <location>
        <begin position="313"/>
        <end position="316"/>
    </location>
    <ligand>
        <name>GTP</name>
        <dbReference type="ChEBI" id="CHEBI:37565"/>
        <label>2</label>
    </ligand>
</feature>
<dbReference type="EMBL" id="AL111168">
    <property type="protein sequence ID" value="CAL34536.1"/>
    <property type="molecule type" value="Genomic_DNA"/>
</dbReference>
<dbReference type="PIR" id="H81381">
    <property type="entry name" value="H81381"/>
</dbReference>
<dbReference type="RefSeq" id="WP_002858744.1">
    <property type="nucleotide sequence ID" value="NZ_SZUC01000004.1"/>
</dbReference>
<dbReference type="RefSeq" id="YP_002343823.1">
    <property type="nucleotide sequence ID" value="NC_002163.1"/>
</dbReference>
<dbReference type="SMR" id="Q9PIB6"/>
<dbReference type="IntAct" id="Q9PIB6">
    <property type="interactions" value="7"/>
</dbReference>
<dbReference type="STRING" id="192222.Cj0386"/>
<dbReference type="PaxDb" id="192222-Cj0386"/>
<dbReference type="EnsemblBacteria" id="CAL34536">
    <property type="protein sequence ID" value="CAL34536"/>
    <property type="gene ID" value="Cj0386"/>
</dbReference>
<dbReference type="GeneID" id="904709"/>
<dbReference type="KEGG" id="cje:Cj0386"/>
<dbReference type="PATRIC" id="fig|192222.6.peg.377"/>
<dbReference type="eggNOG" id="COG1160">
    <property type="taxonomic scope" value="Bacteria"/>
</dbReference>
<dbReference type="HOGENOM" id="CLU_016077_6_2_7"/>
<dbReference type="OrthoDB" id="9805918at2"/>
<dbReference type="Proteomes" id="UP000000799">
    <property type="component" value="Chromosome"/>
</dbReference>
<dbReference type="GO" id="GO:0005525">
    <property type="term" value="F:GTP binding"/>
    <property type="evidence" value="ECO:0007669"/>
    <property type="project" value="UniProtKB-UniRule"/>
</dbReference>
<dbReference type="GO" id="GO:0043022">
    <property type="term" value="F:ribosome binding"/>
    <property type="evidence" value="ECO:0007669"/>
    <property type="project" value="TreeGrafter"/>
</dbReference>
<dbReference type="GO" id="GO:0042254">
    <property type="term" value="P:ribosome biogenesis"/>
    <property type="evidence" value="ECO:0007669"/>
    <property type="project" value="UniProtKB-KW"/>
</dbReference>
<dbReference type="CDD" id="cd01894">
    <property type="entry name" value="EngA1"/>
    <property type="match status" value="1"/>
</dbReference>
<dbReference type="CDD" id="cd01895">
    <property type="entry name" value="EngA2"/>
    <property type="match status" value="1"/>
</dbReference>
<dbReference type="FunFam" id="3.30.300.20:FF:000004">
    <property type="entry name" value="GTPase Der"/>
    <property type="match status" value="1"/>
</dbReference>
<dbReference type="Gene3D" id="3.30.300.20">
    <property type="match status" value="1"/>
</dbReference>
<dbReference type="Gene3D" id="3.40.50.300">
    <property type="entry name" value="P-loop containing nucleotide triphosphate hydrolases"/>
    <property type="match status" value="2"/>
</dbReference>
<dbReference type="HAMAP" id="MF_00195">
    <property type="entry name" value="GTPase_Der"/>
    <property type="match status" value="1"/>
</dbReference>
<dbReference type="InterPro" id="IPR031166">
    <property type="entry name" value="G_ENGA"/>
</dbReference>
<dbReference type="InterPro" id="IPR006073">
    <property type="entry name" value="GTP-bd"/>
</dbReference>
<dbReference type="InterPro" id="IPR016484">
    <property type="entry name" value="GTPase_Der"/>
</dbReference>
<dbReference type="InterPro" id="IPR032859">
    <property type="entry name" value="KH_dom-like"/>
</dbReference>
<dbReference type="InterPro" id="IPR015946">
    <property type="entry name" value="KH_dom-like_a/b"/>
</dbReference>
<dbReference type="InterPro" id="IPR027417">
    <property type="entry name" value="P-loop_NTPase"/>
</dbReference>
<dbReference type="InterPro" id="IPR005225">
    <property type="entry name" value="Small_GTP-bd"/>
</dbReference>
<dbReference type="NCBIfam" id="TIGR03594">
    <property type="entry name" value="GTPase_EngA"/>
    <property type="match status" value="1"/>
</dbReference>
<dbReference type="NCBIfam" id="TIGR00231">
    <property type="entry name" value="small_GTP"/>
    <property type="match status" value="2"/>
</dbReference>
<dbReference type="PANTHER" id="PTHR43834">
    <property type="entry name" value="GTPASE DER"/>
    <property type="match status" value="1"/>
</dbReference>
<dbReference type="PANTHER" id="PTHR43834:SF6">
    <property type="entry name" value="GTPASE DER"/>
    <property type="match status" value="1"/>
</dbReference>
<dbReference type="Pfam" id="PF14714">
    <property type="entry name" value="KH_dom-like"/>
    <property type="match status" value="1"/>
</dbReference>
<dbReference type="Pfam" id="PF01926">
    <property type="entry name" value="MMR_HSR1"/>
    <property type="match status" value="2"/>
</dbReference>
<dbReference type="PIRSF" id="PIRSF006485">
    <property type="entry name" value="GTP-binding_EngA"/>
    <property type="match status" value="1"/>
</dbReference>
<dbReference type="PRINTS" id="PR00326">
    <property type="entry name" value="GTP1OBG"/>
</dbReference>
<dbReference type="SUPFAM" id="SSF52540">
    <property type="entry name" value="P-loop containing nucleoside triphosphate hydrolases"/>
    <property type="match status" value="2"/>
</dbReference>
<dbReference type="PROSITE" id="PS51712">
    <property type="entry name" value="G_ENGA"/>
    <property type="match status" value="2"/>
</dbReference>